<feature type="chain" id="PRO_0000063530" description="Chaperonin GroEL">
    <location>
        <begin position="1"/>
        <end position="545"/>
    </location>
</feature>
<feature type="region of interest" description="Disordered" evidence="2">
    <location>
        <begin position="526"/>
        <end position="545"/>
    </location>
</feature>
<feature type="compositionally biased region" description="Gly residues" evidence="2">
    <location>
        <begin position="533"/>
        <end position="545"/>
    </location>
</feature>
<feature type="binding site" evidence="1">
    <location>
        <begin position="30"/>
        <end position="33"/>
    </location>
    <ligand>
        <name>ATP</name>
        <dbReference type="ChEBI" id="CHEBI:30616"/>
    </ligand>
</feature>
<feature type="binding site" evidence="1">
    <location>
        <position position="51"/>
    </location>
    <ligand>
        <name>ATP</name>
        <dbReference type="ChEBI" id="CHEBI:30616"/>
    </ligand>
</feature>
<feature type="binding site" evidence="1">
    <location>
        <begin position="87"/>
        <end position="91"/>
    </location>
    <ligand>
        <name>ATP</name>
        <dbReference type="ChEBI" id="CHEBI:30616"/>
    </ligand>
</feature>
<feature type="binding site" evidence="1">
    <location>
        <position position="415"/>
    </location>
    <ligand>
        <name>ATP</name>
        <dbReference type="ChEBI" id="CHEBI:30616"/>
    </ligand>
</feature>
<feature type="binding site" evidence="1">
    <location>
        <begin position="479"/>
        <end position="481"/>
    </location>
    <ligand>
        <name>ATP</name>
        <dbReference type="ChEBI" id="CHEBI:30616"/>
    </ligand>
</feature>
<feature type="binding site" evidence="1">
    <location>
        <position position="495"/>
    </location>
    <ligand>
        <name>ATP</name>
        <dbReference type="ChEBI" id="CHEBI:30616"/>
    </ligand>
</feature>
<protein>
    <recommendedName>
        <fullName evidence="1">Chaperonin GroEL</fullName>
        <ecNumber evidence="1">5.6.1.7</ecNumber>
    </recommendedName>
    <alternativeName>
        <fullName evidence="1">60 kDa chaperonin</fullName>
    </alternativeName>
    <alternativeName>
        <fullName evidence="1">Chaperonin-60</fullName>
        <shortName evidence="1">Cpn60</shortName>
    </alternativeName>
</protein>
<comment type="function">
    <text evidence="1">Together with its co-chaperonin GroES, plays an essential role in assisting protein folding. The GroEL-GroES system forms a nano-cage that allows encapsulation of the non-native substrate proteins and provides a physical environment optimized to promote and accelerate protein folding.</text>
</comment>
<comment type="catalytic activity">
    <reaction evidence="1">
        <text>ATP + H2O + a folded polypeptide = ADP + phosphate + an unfolded polypeptide.</text>
        <dbReference type="EC" id="5.6.1.7"/>
    </reaction>
</comment>
<comment type="subunit">
    <text evidence="1">Forms a cylinder of 14 subunits composed of two heptameric rings stacked back-to-back. Interacts with the co-chaperonin GroES.</text>
</comment>
<comment type="subcellular location">
    <subcellularLocation>
        <location evidence="1">Cytoplasm</location>
    </subcellularLocation>
</comment>
<comment type="similarity">
    <text evidence="1">Belongs to the chaperonin (HSP60) family.</text>
</comment>
<proteinExistence type="inferred from homology"/>
<dbReference type="EC" id="5.6.1.7" evidence="1"/>
<dbReference type="EMBL" id="AF326971">
    <property type="protein sequence ID" value="AAG49528.1"/>
    <property type="molecule type" value="Genomic_DNA"/>
</dbReference>
<dbReference type="SMR" id="P0C193"/>
<dbReference type="GO" id="GO:0005737">
    <property type="term" value="C:cytoplasm"/>
    <property type="evidence" value="ECO:0007669"/>
    <property type="project" value="UniProtKB-SubCell"/>
</dbReference>
<dbReference type="GO" id="GO:0005524">
    <property type="term" value="F:ATP binding"/>
    <property type="evidence" value="ECO:0007669"/>
    <property type="project" value="UniProtKB-UniRule"/>
</dbReference>
<dbReference type="GO" id="GO:0140662">
    <property type="term" value="F:ATP-dependent protein folding chaperone"/>
    <property type="evidence" value="ECO:0007669"/>
    <property type="project" value="InterPro"/>
</dbReference>
<dbReference type="GO" id="GO:0016853">
    <property type="term" value="F:isomerase activity"/>
    <property type="evidence" value="ECO:0007669"/>
    <property type="project" value="UniProtKB-KW"/>
</dbReference>
<dbReference type="GO" id="GO:0051082">
    <property type="term" value="F:unfolded protein binding"/>
    <property type="evidence" value="ECO:0007669"/>
    <property type="project" value="UniProtKB-UniRule"/>
</dbReference>
<dbReference type="GO" id="GO:0042026">
    <property type="term" value="P:protein refolding"/>
    <property type="evidence" value="ECO:0007669"/>
    <property type="project" value="UniProtKB-UniRule"/>
</dbReference>
<dbReference type="CDD" id="cd03344">
    <property type="entry name" value="GroEL"/>
    <property type="match status" value="1"/>
</dbReference>
<dbReference type="FunFam" id="1.10.560.10:FF:000001">
    <property type="entry name" value="60 kDa chaperonin"/>
    <property type="match status" value="1"/>
</dbReference>
<dbReference type="FunFam" id="3.50.7.10:FF:000001">
    <property type="entry name" value="60 kDa chaperonin"/>
    <property type="match status" value="1"/>
</dbReference>
<dbReference type="Gene3D" id="3.50.7.10">
    <property type="entry name" value="GroEL"/>
    <property type="match status" value="1"/>
</dbReference>
<dbReference type="Gene3D" id="1.10.560.10">
    <property type="entry name" value="GroEL-like equatorial domain"/>
    <property type="match status" value="1"/>
</dbReference>
<dbReference type="Gene3D" id="3.30.260.10">
    <property type="entry name" value="TCP-1-like chaperonin intermediate domain"/>
    <property type="match status" value="1"/>
</dbReference>
<dbReference type="HAMAP" id="MF_00600">
    <property type="entry name" value="CH60"/>
    <property type="match status" value="1"/>
</dbReference>
<dbReference type="InterPro" id="IPR018370">
    <property type="entry name" value="Chaperonin_Cpn60_CS"/>
</dbReference>
<dbReference type="InterPro" id="IPR001844">
    <property type="entry name" value="Cpn60/GroEL"/>
</dbReference>
<dbReference type="InterPro" id="IPR002423">
    <property type="entry name" value="Cpn60/GroEL/TCP-1"/>
</dbReference>
<dbReference type="InterPro" id="IPR027409">
    <property type="entry name" value="GroEL-like_apical_dom_sf"/>
</dbReference>
<dbReference type="InterPro" id="IPR027413">
    <property type="entry name" value="GROEL-like_equatorial_sf"/>
</dbReference>
<dbReference type="InterPro" id="IPR027410">
    <property type="entry name" value="TCP-1-like_intermed_sf"/>
</dbReference>
<dbReference type="NCBIfam" id="TIGR02348">
    <property type="entry name" value="GroEL"/>
    <property type="match status" value="1"/>
</dbReference>
<dbReference type="NCBIfam" id="NF000592">
    <property type="entry name" value="PRK00013.1"/>
    <property type="match status" value="1"/>
</dbReference>
<dbReference type="NCBIfam" id="NF009487">
    <property type="entry name" value="PRK12849.1"/>
    <property type="match status" value="1"/>
</dbReference>
<dbReference type="NCBIfam" id="NF009488">
    <property type="entry name" value="PRK12850.1"/>
    <property type="match status" value="1"/>
</dbReference>
<dbReference type="NCBIfam" id="NF009489">
    <property type="entry name" value="PRK12851.1"/>
    <property type="match status" value="1"/>
</dbReference>
<dbReference type="PANTHER" id="PTHR45633">
    <property type="entry name" value="60 KDA HEAT SHOCK PROTEIN, MITOCHONDRIAL"/>
    <property type="match status" value="1"/>
</dbReference>
<dbReference type="Pfam" id="PF00118">
    <property type="entry name" value="Cpn60_TCP1"/>
    <property type="match status" value="1"/>
</dbReference>
<dbReference type="PRINTS" id="PR00298">
    <property type="entry name" value="CHAPERONIN60"/>
</dbReference>
<dbReference type="SUPFAM" id="SSF52029">
    <property type="entry name" value="GroEL apical domain-like"/>
    <property type="match status" value="1"/>
</dbReference>
<dbReference type="SUPFAM" id="SSF48592">
    <property type="entry name" value="GroEL equatorial domain-like"/>
    <property type="match status" value="1"/>
</dbReference>
<dbReference type="SUPFAM" id="SSF54849">
    <property type="entry name" value="GroEL-intermediate domain like"/>
    <property type="match status" value="1"/>
</dbReference>
<dbReference type="PROSITE" id="PS00296">
    <property type="entry name" value="CHAPERONINS_CPN60"/>
    <property type="match status" value="1"/>
</dbReference>
<reference key="1">
    <citation type="journal article" date="2001" name="Proc. Natl. Acad. Sci. U.S.A.">
        <title>A novel application of gene arrays: Escherichia coli array provides insight into the biology of the obligate endosymbiont of tsetse flies.</title>
        <authorList>
            <person name="Akman L."/>
            <person name="Aksoy S."/>
        </authorList>
    </citation>
    <scope>NUCLEOTIDE SEQUENCE [GENOMIC DNA]</scope>
    <source>
        <strain>Brevipalpis</strain>
    </source>
</reference>
<name>CH60_SODGL</name>
<sequence length="545" mass="57341">MAAKDVKFGNDARVKMLRGVNVLADAVKVTLGPKGRNVVLDKSFGAPVITKDGVSVAREIELEDKFENMGAQMVKEVASKANDAAGDGTTTATVLAQSIVNEGLKAVAAGMNPMDLKRGIDKAVIAAVEELKKLSVPCSDSKAIAQVGTISANADETVGTLIAEAMAKVGKEGVITVEEGSGLQDELDVVEGMQFDRGYLSPYFVNKPETGAVELESPFILLADKKISNIREMLPVLEAVAKAGKPLLIIAEDVEGEALATLVVNTMRGIVKIAAVKAPGFGDRRKAMLRDIAILTAGTVISEEIGLELEKATLEDMGQAKRVVITKDTTTIIDGEGDKALIDSRVTQINQQRDEATSDYDREKLQERVAKLAGGVAVIKVGAATEVEMKEKKARVEDALHATRAAVEEGVVAGGGVALIRVANRIAELRGDNEDQNVGIKVARRAMEAPLRQIVANAGEEPSVIANKVKAGEGNTGYNAATEEYGNMIDMGILDPTKVTRSALQYAASIAGLMITTECMVTDLPKEDKPDLGGAGGMGGMGGMM</sequence>
<gene>
    <name evidence="1" type="primary">groEL</name>
    <name evidence="1" type="synonym">groL</name>
    <name type="synonym">mopA</name>
</gene>
<organism>
    <name type="scientific">Sodalis glossinidius</name>
    <dbReference type="NCBI Taxonomy" id="63612"/>
    <lineage>
        <taxon>Bacteria</taxon>
        <taxon>Pseudomonadati</taxon>
        <taxon>Pseudomonadota</taxon>
        <taxon>Gammaproteobacteria</taxon>
        <taxon>Enterobacterales</taxon>
        <taxon>Bruguierivoracaceae</taxon>
        <taxon>Sodalis</taxon>
    </lineage>
</organism>
<evidence type="ECO:0000255" key="1">
    <source>
        <dbReference type="HAMAP-Rule" id="MF_00600"/>
    </source>
</evidence>
<evidence type="ECO:0000256" key="2">
    <source>
        <dbReference type="SAM" id="MobiDB-lite"/>
    </source>
</evidence>
<keyword id="KW-0067">ATP-binding</keyword>
<keyword id="KW-0143">Chaperone</keyword>
<keyword id="KW-0963">Cytoplasm</keyword>
<keyword id="KW-0413">Isomerase</keyword>
<keyword id="KW-0547">Nucleotide-binding</keyword>
<accession>P0C193</accession>
<accession>Q93MH9</accession>
<accession>Q9AMB4</accession>
<accession>Q9ANR8</accession>